<accession>Q1H4R5</accession>
<organism>
    <name type="scientific">Methylobacillus flagellatus (strain ATCC 51484 / DSM 6875 / VKM B-1610 / KT)</name>
    <dbReference type="NCBI Taxonomy" id="265072"/>
    <lineage>
        <taxon>Bacteria</taxon>
        <taxon>Pseudomonadati</taxon>
        <taxon>Pseudomonadota</taxon>
        <taxon>Betaproteobacteria</taxon>
        <taxon>Nitrosomonadales</taxon>
        <taxon>Methylophilaceae</taxon>
        <taxon>Methylobacillus</taxon>
    </lineage>
</organism>
<comment type="catalytic activity">
    <reaction evidence="1">
        <text>D-erythro-1-(imidazol-4-yl)glycerol 3-phosphate = 3-(imidazol-4-yl)-2-oxopropyl phosphate + H2O</text>
        <dbReference type="Rhea" id="RHEA:11040"/>
        <dbReference type="ChEBI" id="CHEBI:15377"/>
        <dbReference type="ChEBI" id="CHEBI:57766"/>
        <dbReference type="ChEBI" id="CHEBI:58278"/>
        <dbReference type="EC" id="4.2.1.19"/>
    </reaction>
</comment>
<comment type="pathway">
    <text evidence="1">Amino-acid biosynthesis; L-histidine biosynthesis; L-histidine from 5-phospho-alpha-D-ribose 1-diphosphate: step 6/9.</text>
</comment>
<comment type="subcellular location">
    <subcellularLocation>
        <location evidence="1">Cytoplasm</location>
    </subcellularLocation>
</comment>
<comment type="similarity">
    <text evidence="1">Belongs to the imidazoleglycerol-phosphate dehydratase family.</text>
</comment>
<reference key="1">
    <citation type="submission" date="2006-03" db="EMBL/GenBank/DDBJ databases">
        <title>Complete sequence of Methylobacillus flagellatus KT.</title>
        <authorList>
            <consortium name="US DOE Joint Genome Institute"/>
            <person name="Copeland A."/>
            <person name="Lucas S."/>
            <person name="Lapidus A."/>
            <person name="Barry K."/>
            <person name="Detter J.C."/>
            <person name="Glavina del Rio T."/>
            <person name="Hammon N."/>
            <person name="Israni S."/>
            <person name="Dalin E."/>
            <person name="Tice H."/>
            <person name="Pitluck S."/>
            <person name="Brettin T."/>
            <person name="Bruce D."/>
            <person name="Han C."/>
            <person name="Tapia R."/>
            <person name="Saunders E."/>
            <person name="Gilna P."/>
            <person name="Schmutz J."/>
            <person name="Larimer F."/>
            <person name="Land M."/>
            <person name="Kyrpides N."/>
            <person name="Anderson I."/>
            <person name="Richardson P."/>
        </authorList>
    </citation>
    <scope>NUCLEOTIDE SEQUENCE [LARGE SCALE GENOMIC DNA]</scope>
    <source>
        <strain>ATCC 51484 / DSM 6875 / VKM B-1610 / KT</strain>
    </source>
</reference>
<protein>
    <recommendedName>
        <fullName evidence="1">Imidazoleglycerol-phosphate dehydratase</fullName>
        <shortName evidence="1">IGPD</shortName>
        <ecNumber evidence="1">4.2.1.19</ecNumber>
    </recommendedName>
</protein>
<sequence length="198" mass="21709">MTAMRNAEVSRNTLETKIAVAINLDGTGISRLNSGVGFFDHMLDQIARHGMMDISVECQGDLHIDAHHTVEDVGIALGQAFSKALGDKKGIRRYAHAYVPLDEALSRVVLDISGRPGLEFNVEFTRARIGEFDVDLVSEFFQGFVNHAAITLHIDNLRGKNAHHQAETIFKAFGRALRAAVELDPRMVGIMPSTKGSL</sequence>
<evidence type="ECO:0000255" key="1">
    <source>
        <dbReference type="HAMAP-Rule" id="MF_00076"/>
    </source>
</evidence>
<gene>
    <name evidence="1" type="primary">hisB</name>
    <name type="ordered locus">Mfla_0251</name>
</gene>
<name>HIS7_METFK</name>
<proteinExistence type="inferred from homology"/>
<keyword id="KW-0028">Amino-acid biosynthesis</keyword>
<keyword id="KW-0963">Cytoplasm</keyword>
<keyword id="KW-0368">Histidine biosynthesis</keyword>
<keyword id="KW-0456">Lyase</keyword>
<keyword id="KW-1185">Reference proteome</keyword>
<feature type="chain" id="PRO_0000336321" description="Imidazoleglycerol-phosphate dehydratase">
    <location>
        <begin position="1"/>
        <end position="198"/>
    </location>
</feature>
<dbReference type="EC" id="4.2.1.19" evidence="1"/>
<dbReference type="EMBL" id="CP000284">
    <property type="protein sequence ID" value="ABE48522.1"/>
    <property type="molecule type" value="Genomic_DNA"/>
</dbReference>
<dbReference type="SMR" id="Q1H4R5"/>
<dbReference type="STRING" id="265072.Mfla_0251"/>
<dbReference type="KEGG" id="mfa:Mfla_0251"/>
<dbReference type="eggNOG" id="COG0131">
    <property type="taxonomic scope" value="Bacteria"/>
</dbReference>
<dbReference type="HOGENOM" id="CLU_044308_3_0_4"/>
<dbReference type="UniPathway" id="UPA00031">
    <property type="reaction ID" value="UER00011"/>
</dbReference>
<dbReference type="Proteomes" id="UP000002440">
    <property type="component" value="Chromosome"/>
</dbReference>
<dbReference type="GO" id="GO:0005737">
    <property type="term" value="C:cytoplasm"/>
    <property type="evidence" value="ECO:0007669"/>
    <property type="project" value="UniProtKB-SubCell"/>
</dbReference>
<dbReference type="GO" id="GO:0004424">
    <property type="term" value="F:imidazoleglycerol-phosphate dehydratase activity"/>
    <property type="evidence" value="ECO:0007669"/>
    <property type="project" value="UniProtKB-UniRule"/>
</dbReference>
<dbReference type="GO" id="GO:0000105">
    <property type="term" value="P:L-histidine biosynthetic process"/>
    <property type="evidence" value="ECO:0007669"/>
    <property type="project" value="UniProtKB-UniRule"/>
</dbReference>
<dbReference type="CDD" id="cd07914">
    <property type="entry name" value="IGPD"/>
    <property type="match status" value="1"/>
</dbReference>
<dbReference type="FunFam" id="3.30.230.40:FF:000002">
    <property type="entry name" value="Imidazoleglycerol-phosphate dehydratase"/>
    <property type="match status" value="1"/>
</dbReference>
<dbReference type="FunFam" id="3.30.230.40:FF:000003">
    <property type="entry name" value="Imidazoleglycerol-phosphate dehydratase HisB"/>
    <property type="match status" value="1"/>
</dbReference>
<dbReference type="Gene3D" id="3.30.230.40">
    <property type="entry name" value="Imidazole glycerol phosphate dehydratase, domain 1"/>
    <property type="match status" value="2"/>
</dbReference>
<dbReference type="HAMAP" id="MF_00076">
    <property type="entry name" value="HisB"/>
    <property type="match status" value="1"/>
</dbReference>
<dbReference type="InterPro" id="IPR038494">
    <property type="entry name" value="IGPD_sf"/>
</dbReference>
<dbReference type="InterPro" id="IPR000807">
    <property type="entry name" value="ImidazoleglycerolP_deHydtase"/>
</dbReference>
<dbReference type="InterPro" id="IPR020565">
    <property type="entry name" value="ImidazoleglycerP_deHydtase_CS"/>
</dbReference>
<dbReference type="InterPro" id="IPR020568">
    <property type="entry name" value="Ribosomal_Su5_D2-typ_SF"/>
</dbReference>
<dbReference type="NCBIfam" id="NF002106">
    <property type="entry name" value="PRK00951.1-1"/>
    <property type="match status" value="1"/>
</dbReference>
<dbReference type="NCBIfam" id="NF002109">
    <property type="entry name" value="PRK00951.1-5"/>
    <property type="match status" value="1"/>
</dbReference>
<dbReference type="NCBIfam" id="NF002111">
    <property type="entry name" value="PRK00951.2-1"/>
    <property type="match status" value="1"/>
</dbReference>
<dbReference type="NCBIfam" id="NF002114">
    <property type="entry name" value="PRK00951.2-4"/>
    <property type="match status" value="1"/>
</dbReference>
<dbReference type="NCBIfam" id="NF002116">
    <property type="entry name" value="PRK00951.2-6"/>
    <property type="match status" value="1"/>
</dbReference>
<dbReference type="PANTHER" id="PTHR23133:SF2">
    <property type="entry name" value="IMIDAZOLEGLYCEROL-PHOSPHATE DEHYDRATASE"/>
    <property type="match status" value="1"/>
</dbReference>
<dbReference type="PANTHER" id="PTHR23133">
    <property type="entry name" value="IMIDAZOLEGLYCEROL-PHOSPHATE DEHYDRATASE HIS7"/>
    <property type="match status" value="1"/>
</dbReference>
<dbReference type="Pfam" id="PF00475">
    <property type="entry name" value="IGPD"/>
    <property type="match status" value="1"/>
</dbReference>
<dbReference type="SUPFAM" id="SSF54211">
    <property type="entry name" value="Ribosomal protein S5 domain 2-like"/>
    <property type="match status" value="2"/>
</dbReference>
<dbReference type="PROSITE" id="PS00954">
    <property type="entry name" value="IGP_DEHYDRATASE_1"/>
    <property type="match status" value="1"/>
</dbReference>
<dbReference type="PROSITE" id="PS00955">
    <property type="entry name" value="IGP_DEHYDRATASE_2"/>
    <property type="match status" value="1"/>
</dbReference>